<proteinExistence type="inferred from homology"/>
<reference key="1">
    <citation type="journal article" date="2005" name="J. Bacteriol.">
        <title>Completion of the genome sequence of Brucella abortus and comparison to the highly similar genomes of Brucella melitensis and Brucella suis.</title>
        <authorList>
            <person name="Halling S.M."/>
            <person name="Peterson-Burch B.D."/>
            <person name="Bricker B.J."/>
            <person name="Zuerner R.L."/>
            <person name="Qing Z."/>
            <person name="Li L.-L."/>
            <person name="Kapur V."/>
            <person name="Alt D.P."/>
            <person name="Olsen S.C."/>
        </authorList>
    </citation>
    <scope>NUCLEOTIDE SEQUENCE [LARGE SCALE GENOMIC DNA]</scope>
    <source>
        <strain>9-941</strain>
    </source>
</reference>
<dbReference type="EMBL" id="AE017224">
    <property type="protein sequence ID" value="AAX75513.1"/>
    <property type="molecule type" value="Genomic_DNA"/>
</dbReference>
<dbReference type="RefSeq" id="WP_002966517.1">
    <property type="nucleotide sequence ID" value="NC_006933.1"/>
</dbReference>
<dbReference type="SMR" id="P0C532"/>
<dbReference type="EnsemblBacteria" id="AAX75513">
    <property type="protein sequence ID" value="AAX75513"/>
    <property type="gene ID" value="BruAb2_0062"/>
</dbReference>
<dbReference type="KEGG" id="bmb:BruAb2_0062"/>
<dbReference type="HOGENOM" id="CLU_068461_1_1_5"/>
<dbReference type="PRO" id="PR:P0C532"/>
<dbReference type="Proteomes" id="UP000000540">
    <property type="component" value="Chromosome II"/>
</dbReference>
<dbReference type="GO" id="GO:0005886">
    <property type="term" value="C:plasma membrane"/>
    <property type="evidence" value="ECO:0007669"/>
    <property type="project" value="UniProtKB-SubCell"/>
</dbReference>
<dbReference type="GO" id="GO:0030255">
    <property type="term" value="P:protein secretion by the type IV secretion system"/>
    <property type="evidence" value="ECO:0007669"/>
    <property type="project" value="InterPro"/>
</dbReference>
<dbReference type="CDD" id="cd16424">
    <property type="entry name" value="VirB8"/>
    <property type="match status" value="1"/>
</dbReference>
<dbReference type="Gene3D" id="3.10.450.230">
    <property type="entry name" value="VirB8 protein"/>
    <property type="match status" value="1"/>
</dbReference>
<dbReference type="InterPro" id="IPR032710">
    <property type="entry name" value="NTF2-like_dom_sf"/>
</dbReference>
<dbReference type="InterPro" id="IPR007430">
    <property type="entry name" value="VirB8"/>
</dbReference>
<dbReference type="InterPro" id="IPR026264">
    <property type="entry name" value="VirB8/PtlE"/>
</dbReference>
<dbReference type="Pfam" id="PF04335">
    <property type="entry name" value="VirB8"/>
    <property type="match status" value="1"/>
</dbReference>
<dbReference type="PIRSF" id="PIRSF003299">
    <property type="entry name" value="VirB8_PtlE"/>
    <property type="match status" value="1"/>
</dbReference>
<dbReference type="SUPFAM" id="SSF54427">
    <property type="entry name" value="NTF2-like"/>
    <property type="match status" value="1"/>
</dbReference>
<accession>P0C532</accession>
<accession>Q57A21</accession>
<accession>Q7BMZ6</accession>
<comment type="subcellular location">
    <subcellularLocation>
        <location evidence="2">Cell inner membrane</location>
        <topology evidence="2">Single-pass membrane protein</topology>
    </subcellularLocation>
</comment>
<comment type="similarity">
    <text evidence="2">Belongs to the virB8 family.</text>
</comment>
<name>VIRB8_BRUAB</name>
<organism>
    <name type="scientific">Brucella abortus biovar 1 (strain 9-941)</name>
    <dbReference type="NCBI Taxonomy" id="262698"/>
    <lineage>
        <taxon>Bacteria</taxon>
        <taxon>Pseudomonadati</taxon>
        <taxon>Pseudomonadota</taxon>
        <taxon>Alphaproteobacteria</taxon>
        <taxon>Hyphomicrobiales</taxon>
        <taxon>Brucellaceae</taxon>
        <taxon>Brucella/Ochrobactrum group</taxon>
        <taxon>Brucella</taxon>
    </lineage>
</organism>
<evidence type="ECO:0000255" key="1"/>
<evidence type="ECO:0000305" key="2"/>
<gene>
    <name type="primary">virB8</name>
    <name type="ordered locus">BruAb2_0062</name>
</gene>
<keyword id="KW-0997">Cell inner membrane</keyword>
<keyword id="KW-1003">Cell membrane</keyword>
<keyword id="KW-0472">Membrane</keyword>
<keyword id="KW-0812">Transmembrane</keyword>
<keyword id="KW-1133">Transmembrane helix</keyword>
<keyword id="KW-0843">Virulence</keyword>
<feature type="chain" id="PRO_0000291390" description="Type IV secretion system protein virB8">
    <location>
        <begin position="1"/>
        <end position="239"/>
    </location>
</feature>
<feature type="transmembrane region" description="Helical" evidence="1">
    <location>
        <begin position="47"/>
        <end position="67"/>
    </location>
</feature>
<protein>
    <recommendedName>
        <fullName>Type IV secretion system protein virB8</fullName>
    </recommendedName>
</protein>
<sequence length="239" mass="26446">MFGRKQSPQKSVKNGQGNAPSVYDEALNWEAAHVRLVEKSERRAWKIAGAFGTITVLLGIGIAGMLPLKQHVPYLVRVNAQTGAPDILTSLDEKSVSYDTVMDKYWLSQYVIARETYDWYTLQKDYETVGMLSSPSEGQSYASQFQGDKALDKQYGSNVRTSVTIVSIVPNGKGIGTVRFAKTTKRTNETGDGETTHWIATIGYQYVNPSLMSESARLTNPLGFNVTSYRVDPEMGVVQ</sequence>